<dbReference type="EC" id="1.5.1.5" evidence="1"/>
<dbReference type="EC" id="3.5.4.9" evidence="1"/>
<dbReference type="EMBL" id="CP001138">
    <property type="protein sequence ID" value="ACH49385.1"/>
    <property type="molecule type" value="Genomic_DNA"/>
</dbReference>
<dbReference type="RefSeq" id="WP_000729165.1">
    <property type="nucleotide sequence ID" value="NC_011149.1"/>
</dbReference>
<dbReference type="SMR" id="B5EYE2"/>
<dbReference type="KEGG" id="sea:SeAg_B0588"/>
<dbReference type="HOGENOM" id="CLU_034045_2_1_6"/>
<dbReference type="UniPathway" id="UPA00193"/>
<dbReference type="Proteomes" id="UP000008819">
    <property type="component" value="Chromosome"/>
</dbReference>
<dbReference type="GO" id="GO:0005829">
    <property type="term" value="C:cytosol"/>
    <property type="evidence" value="ECO:0007669"/>
    <property type="project" value="TreeGrafter"/>
</dbReference>
<dbReference type="GO" id="GO:0004477">
    <property type="term" value="F:methenyltetrahydrofolate cyclohydrolase activity"/>
    <property type="evidence" value="ECO:0007669"/>
    <property type="project" value="UniProtKB-UniRule"/>
</dbReference>
<dbReference type="GO" id="GO:0004488">
    <property type="term" value="F:methylenetetrahydrofolate dehydrogenase (NADP+) activity"/>
    <property type="evidence" value="ECO:0007669"/>
    <property type="project" value="UniProtKB-UniRule"/>
</dbReference>
<dbReference type="GO" id="GO:0000105">
    <property type="term" value="P:L-histidine biosynthetic process"/>
    <property type="evidence" value="ECO:0007669"/>
    <property type="project" value="UniProtKB-KW"/>
</dbReference>
<dbReference type="GO" id="GO:0009086">
    <property type="term" value="P:methionine biosynthetic process"/>
    <property type="evidence" value="ECO:0007669"/>
    <property type="project" value="UniProtKB-KW"/>
</dbReference>
<dbReference type="GO" id="GO:0006164">
    <property type="term" value="P:purine nucleotide biosynthetic process"/>
    <property type="evidence" value="ECO:0007669"/>
    <property type="project" value="UniProtKB-KW"/>
</dbReference>
<dbReference type="GO" id="GO:0035999">
    <property type="term" value="P:tetrahydrofolate interconversion"/>
    <property type="evidence" value="ECO:0007669"/>
    <property type="project" value="UniProtKB-UniRule"/>
</dbReference>
<dbReference type="CDD" id="cd01080">
    <property type="entry name" value="NAD_bind_m-THF_DH_Cyclohyd"/>
    <property type="match status" value="1"/>
</dbReference>
<dbReference type="FunFam" id="3.40.50.10860:FF:000001">
    <property type="entry name" value="Bifunctional protein FolD"/>
    <property type="match status" value="1"/>
</dbReference>
<dbReference type="FunFam" id="3.40.50.720:FF:000006">
    <property type="entry name" value="Bifunctional protein FolD"/>
    <property type="match status" value="1"/>
</dbReference>
<dbReference type="Gene3D" id="3.40.50.10860">
    <property type="entry name" value="Leucine Dehydrogenase, chain A, domain 1"/>
    <property type="match status" value="1"/>
</dbReference>
<dbReference type="Gene3D" id="3.40.50.720">
    <property type="entry name" value="NAD(P)-binding Rossmann-like Domain"/>
    <property type="match status" value="1"/>
</dbReference>
<dbReference type="HAMAP" id="MF_01576">
    <property type="entry name" value="THF_DHG_CYH"/>
    <property type="match status" value="1"/>
</dbReference>
<dbReference type="InterPro" id="IPR046346">
    <property type="entry name" value="Aminoacid_DH-like_N_sf"/>
</dbReference>
<dbReference type="InterPro" id="IPR036291">
    <property type="entry name" value="NAD(P)-bd_dom_sf"/>
</dbReference>
<dbReference type="InterPro" id="IPR000672">
    <property type="entry name" value="THF_DH/CycHdrlase"/>
</dbReference>
<dbReference type="InterPro" id="IPR020630">
    <property type="entry name" value="THF_DH/CycHdrlase_cat_dom"/>
</dbReference>
<dbReference type="InterPro" id="IPR020867">
    <property type="entry name" value="THF_DH/CycHdrlase_CS"/>
</dbReference>
<dbReference type="InterPro" id="IPR020631">
    <property type="entry name" value="THF_DH/CycHdrlase_NAD-bd_dom"/>
</dbReference>
<dbReference type="NCBIfam" id="NF008058">
    <property type="entry name" value="PRK10792.1"/>
    <property type="match status" value="1"/>
</dbReference>
<dbReference type="NCBIfam" id="NF010783">
    <property type="entry name" value="PRK14186.1"/>
    <property type="match status" value="1"/>
</dbReference>
<dbReference type="PANTHER" id="PTHR48099:SF5">
    <property type="entry name" value="C-1-TETRAHYDROFOLATE SYNTHASE, CYTOPLASMIC"/>
    <property type="match status" value="1"/>
</dbReference>
<dbReference type="PANTHER" id="PTHR48099">
    <property type="entry name" value="C-1-TETRAHYDROFOLATE SYNTHASE, CYTOPLASMIC-RELATED"/>
    <property type="match status" value="1"/>
</dbReference>
<dbReference type="Pfam" id="PF00763">
    <property type="entry name" value="THF_DHG_CYH"/>
    <property type="match status" value="1"/>
</dbReference>
<dbReference type="Pfam" id="PF02882">
    <property type="entry name" value="THF_DHG_CYH_C"/>
    <property type="match status" value="1"/>
</dbReference>
<dbReference type="PRINTS" id="PR00085">
    <property type="entry name" value="THFDHDRGNASE"/>
</dbReference>
<dbReference type="SUPFAM" id="SSF53223">
    <property type="entry name" value="Aminoacid dehydrogenase-like, N-terminal domain"/>
    <property type="match status" value="1"/>
</dbReference>
<dbReference type="SUPFAM" id="SSF51735">
    <property type="entry name" value="NAD(P)-binding Rossmann-fold domains"/>
    <property type="match status" value="1"/>
</dbReference>
<dbReference type="PROSITE" id="PS00766">
    <property type="entry name" value="THF_DHG_CYH_1"/>
    <property type="match status" value="1"/>
</dbReference>
<dbReference type="PROSITE" id="PS00767">
    <property type="entry name" value="THF_DHG_CYH_2"/>
    <property type="match status" value="1"/>
</dbReference>
<reference key="1">
    <citation type="journal article" date="2011" name="J. Bacteriol.">
        <title>Comparative genomics of 28 Salmonella enterica isolates: evidence for CRISPR-mediated adaptive sublineage evolution.</title>
        <authorList>
            <person name="Fricke W.F."/>
            <person name="Mammel M.K."/>
            <person name="McDermott P.F."/>
            <person name="Tartera C."/>
            <person name="White D.G."/>
            <person name="Leclerc J.E."/>
            <person name="Ravel J."/>
            <person name="Cebula T.A."/>
        </authorList>
    </citation>
    <scope>NUCLEOTIDE SEQUENCE [LARGE SCALE GENOMIC DNA]</scope>
    <source>
        <strain>SL483</strain>
    </source>
</reference>
<evidence type="ECO:0000255" key="1">
    <source>
        <dbReference type="HAMAP-Rule" id="MF_01576"/>
    </source>
</evidence>
<comment type="function">
    <text evidence="1">Catalyzes the oxidation of 5,10-methylenetetrahydrofolate to 5,10-methenyltetrahydrofolate and then the hydrolysis of 5,10-methenyltetrahydrofolate to 10-formyltetrahydrofolate.</text>
</comment>
<comment type="catalytic activity">
    <reaction evidence="1">
        <text>(6R)-5,10-methylene-5,6,7,8-tetrahydrofolate + NADP(+) = (6R)-5,10-methenyltetrahydrofolate + NADPH</text>
        <dbReference type="Rhea" id="RHEA:22812"/>
        <dbReference type="ChEBI" id="CHEBI:15636"/>
        <dbReference type="ChEBI" id="CHEBI:57455"/>
        <dbReference type="ChEBI" id="CHEBI:57783"/>
        <dbReference type="ChEBI" id="CHEBI:58349"/>
        <dbReference type="EC" id="1.5.1.5"/>
    </reaction>
</comment>
<comment type="catalytic activity">
    <reaction evidence="1">
        <text>(6R)-5,10-methenyltetrahydrofolate + H2O = (6R)-10-formyltetrahydrofolate + H(+)</text>
        <dbReference type="Rhea" id="RHEA:23700"/>
        <dbReference type="ChEBI" id="CHEBI:15377"/>
        <dbReference type="ChEBI" id="CHEBI:15378"/>
        <dbReference type="ChEBI" id="CHEBI:57455"/>
        <dbReference type="ChEBI" id="CHEBI:195366"/>
        <dbReference type="EC" id="3.5.4.9"/>
    </reaction>
</comment>
<comment type="pathway">
    <text evidence="1">One-carbon metabolism; tetrahydrofolate interconversion.</text>
</comment>
<comment type="subunit">
    <text evidence="1">Homodimer.</text>
</comment>
<comment type="similarity">
    <text evidence="1">Belongs to the tetrahydrofolate dehydrogenase/cyclohydrolase family.</text>
</comment>
<sequence>MAAKIIDGKTIAQQVRSEVAQKVQARVAAGLRAPGLAVVLVGSNPASQIYVASKRKACDEVGFVSRSYDLPETTSEAELLALIDTLNADNTIDGILVQLPLPAGIDNVKVLERIAPDKDVDGFHPYNVGRLCQRAPRLRPCTPRGIVTLLERYNIDTYGLNAVVIGASNIVGRPMSMELLLAGCTTTVTHRFTKDLRHHVEHADLLIVAVGKPGFIPGEWIKEGAIVIDVGINRLENGKVVGDVVFDEAAARASYITPVPGGVGPMTVATLIENTLQACIEYHDPQGK</sequence>
<organism>
    <name type="scientific">Salmonella agona (strain SL483)</name>
    <dbReference type="NCBI Taxonomy" id="454166"/>
    <lineage>
        <taxon>Bacteria</taxon>
        <taxon>Pseudomonadati</taxon>
        <taxon>Pseudomonadota</taxon>
        <taxon>Gammaproteobacteria</taxon>
        <taxon>Enterobacterales</taxon>
        <taxon>Enterobacteriaceae</taxon>
        <taxon>Salmonella</taxon>
    </lineage>
</organism>
<keyword id="KW-0028">Amino-acid biosynthesis</keyword>
<keyword id="KW-0368">Histidine biosynthesis</keyword>
<keyword id="KW-0378">Hydrolase</keyword>
<keyword id="KW-0486">Methionine biosynthesis</keyword>
<keyword id="KW-0511">Multifunctional enzyme</keyword>
<keyword id="KW-0521">NADP</keyword>
<keyword id="KW-0554">One-carbon metabolism</keyword>
<keyword id="KW-0560">Oxidoreductase</keyword>
<keyword id="KW-0658">Purine biosynthesis</keyword>
<gene>
    <name evidence="1" type="primary">folD</name>
    <name type="ordered locus">SeAg_B0588</name>
</gene>
<name>FOLD_SALA4</name>
<accession>B5EYE2</accession>
<feature type="chain" id="PRO_1000147516" description="Bifunctional protein FolD">
    <location>
        <begin position="1"/>
        <end position="288"/>
    </location>
</feature>
<feature type="binding site" evidence="1">
    <location>
        <begin position="166"/>
        <end position="168"/>
    </location>
    <ligand>
        <name>NADP(+)</name>
        <dbReference type="ChEBI" id="CHEBI:58349"/>
    </ligand>
</feature>
<feature type="binding site" evidence="1">
    <location>
        <position position="232"/>
    </location>
    <ligand>
        <name>NADP(+)</name>
        <dbReference type="ChEBI" id="CHEBI:58349"/>
    </ligand>
</feature>
<proteinExistence type="inferred from homology"/>
<protein>
    <recommendedName>
        <fullName evidence="1">Bifunctional protein FolD</fullName>
    </recommendedName>
    <domain>
        <recommendedName>
            <fullName evidence="1">Methylenetetrahydrofolate dehydrogenase</fullName>
            <ecNumber evidence="1">1.5.1.5</ecNumber>
        </recommendedName>
    </domain>
    <domain>
        <recommendedName>
            <fullName evidence="1">Methenyltetrahydrofolate cyclohydrolase</fullName>
            <ecNumber evidence="1">3.5.4.9</ecNumber>
        </recommendedName>
    </domain>
</protein>